<name>Y2944_BURM7</name>
<sequence>MIIVLSPAKSLDYETPPHVSHHTQPQFADDAAALIDELRRLSPQQIATLMSISDPLARLNFQRYADWSRASTPANAKQAVLAFNGDVYEGLDARSLSPDDLDYAQRHVRVLSGLYGLLRPLDLLQPYRLEMGTRFSNARGKDLYAFWGERITHALNAELKTRVGASRVLVNCASAEYFKSVKPKLLDARVVTPVFEDWKDGRYKIISFHAKRARGLMARYVVEGRIDSPDALKDFASEGYAFDASASNDDTYVFRRRAGA</sequence>
<organism>
    <name type="scientific">Burkholderia mallei (strain NCTC 10247)</name>
    <dbReference type="NCBI Taxonomy" id="320389"/>
    <lineage>
        <taxon>Bacteria</taxon>
        <taxon>Pseudomonadati</taxon>
        <taxon>Pseudomonadota</taxon>
        <taxon>Betaproteobacteria</taxon>
        <taxon>Burkholderiales</taxon>
        <taxon>Burkholderiaceae</taxon>
        <taxon>Burkholderia</taxon>
        <taxon>pseudomallei group</taxon>
    </lineage>
</organism>
<feature type="chain" id="PRO_1000061589" description="UPF0246 protein BMA10247_0444">
    <location>
        <begin position="1"/>
        <end position="260"/>
    </location>
</feature>
<gene>
    <name type="ordered locus">BMA10247_0444</name>
</gene>
<accession>A3MID2</accession>
<evidence type="ECO:0000255" key="1">
    <source>
        <dbReference type="HAMAP-Rule" id="MF_00652"/>
    </source>
</evidence>
<reference key="1">
    <citation type="journal article" date="2010" name="Genome Biol. Evol.">
        <title>Continuing evolution of Burkholderia mallei through genome reduction and large-scale rearrangements.</title>
        <authorList>
            <person name="Losada L."/>
            <person name="Ronning C.M."/>
            <person name="DeShazer D."/>
            <person name="Woods D."/>
            <person name="Fedorova N."/>
            <person name="Kim H.S."/>
            <person name="Shabalina S.A."/>
            <person name="Pearson T.R."/>
            <person name="Brinkac L."/>
            <person name="Tan P."/>
            <person name="Nandi T."/>
            <person name="Crabtree J."/>
            <person name="Badger J."/>
            <person name="Beckstrom-Sternberg S."/>
            <person name="Saqib M."/>
            <person name="Schutzer S.E."/>
            <person name="Keim P."/>
            <person name="Nierman W.C."/>
        </authorList>
    </citation>
    <scope>NUCLEOTIDE SEQUENCE [LARGE SCALE GENOMIC DNA]</scope>
    <source>
        <strain>NCTC 10247</strain>
    </source>
</reference>
<dbReference type="EMBL" id="CP000548">
    <property type="protein sequence ID" value="ABO05140.1"/>
    <property type="molecule type" value="Genomic_DNA"/>
</dbReference>
<dbReference type="SMR" id="A3MID2"/>
<dbReference type="KEGG" id="bmaz:BM44_2568"/>
<dbReference type="KEGG" id="bmn:BMA10247_0444"/>
<dbReference type="PATRIC" id="fig|320389.8.peg.2901"/>
<dbReference type="GO" id="GO:0005829">
    <property type="term" value="C:cytosol"/>
    <property type="evidence" value="ECO:0007669"/>
    <property type="project" value="TreeGrafter"/>
</dbReference>
<dbReference type="GO" id="GO:0033194">
    <property type="term" value="P:response to hydroperoxide"/>
    <property type="evidence" value="ECO:0007669"/>
    <property type="project" value="TreeGrafter"/>
</dbReference>
<dbReference type="HAMAP" id="MF_00652">
    <property type="entry name" value="UPF0246"/>
    <property type="match status" value="1"/>
</dbReference>
<dbReference type="InterPro" id="IPR005583">
    <property type="entry name" value="YaaA"/>
</dbReference>
<dbReference type="NCBIfam" id="NF002541">
    <property type="entry name" value="PRK02101.1-1"/>
    <property type="match status" value="1"/>
</dbReference>
<dbReference type="NCBIfam" id="NF002542">
    <property type="entry name" value="PRK02101.1-3"/>
    <property type="match status" value="1"/>
</dbReference>
<dbReference type="PANTHER" id="PTHR30283:SF4">
    <property type="entry name" value="PEROXIDE STRESS RESISTANCE PROTEIN YAAA"/>
    <property type="match status" value="1"/>
</dbReference>
<dbReference type="PANTHER" id="PTHR30283">
    <property type="entry name" value="PEROXIDE STRESS RESPONSE PROTEIN YAAA"/>
    <property type="match status" value="1"/>
</dbReference>
<dbReference type="Pfam" id="PF03883">
    <property type="entry name" value="H2O2_YaaD"/>
    <property type="match status" value="1"/>
</dbReference>
<proteinExistence type="inferred from homology"/>
<protein>
    <recommendedName>
        <fullName evidence="1">UPF0246 protein BMA10247_0444</fullName>
    </recommendedName>
</protein>
<comment type="similarity">
    <text evidence="1">Belongs to the UPF0246 family.</text>
</comment>